<keyword id="KW-0004">4Fe-4S</keyword>
<keyword id="KW-0408">Iron</keyword>
<keyword id="KW-0411">Iron-sulfur</keyword>
<keyword id="KW-0479">Metal-binding</keyword>
<keyword id="KW-0949">S-adenosyl-L-methionine</keyword>
<keyword id="KW-0808">Transferase</keyword>
<gene>
    <name evidence="1" type="primary">cofH</name>
    <name type="ordered locus">Ava_0775</name>
</gene>
<comment type="function">
    <text evidence="1">Catalyzes the radical-mediated synthesis of 5-amino-5-(4-hydroxybenzyl)-6-(D-ribitylimino)-5,6-dihydrouracil from 5-amino-6-(D-ribitylamino)uracil and L-tyrosine.</text>
</comment>
<comment type="catalytic activity">
    <reaction evidence="1">
        <text>5-amino-6-(D-ribitylamino)uracil + L-tyrosine + S-adenosyl-L-methionine = 5-amino-5-(4-hydroxybenzyl)-6-(D-ribitylimino)-5,6-dihydrouracil + 2-iminoacetate + 5'-deoxyadenosine + L-methionine + H(+)</text>
        <dbReference type="Rhea" id="RHEA:55200"/>
        <dbReference type="ChEBI" id="CHEBI:15378"/>
        <dbReference type="ChEBI" id="CHEBI:15934"/>
        <dbReference type="ChEBI" id="CHEBI:17319"/>
        <dbReference type="ChEBI" id="CHEBI:57844"/>
        <dbReference type="ChEBI" id="CHEBI:58315"/>
        <dbReference type="ChEBI" id="CHEBI:59789"/>
        <dbReference type="ChEBI" id="CHEBI:77846"/>
        <dbReference type="ChEBI" id="CHEBI:85936"/>
        <dbReference type="EC" id="2.5.1.147"/>
    </reaction>
</comment>
<comment type="cofactor">
    <cofactor evidence="1">
        <name>[4Fe-4S] cluster</name>
        <dbReference type="ChEBI" id="CHEBI:49883"/>
    </cofactor>
    <text evidence="1">Binds 1 [4Fe-4S] cluster. The cluster is coordinated with 3 cysteines and an exchangeable S-adenosyl-L-methionine.</text>
</comment>
<comment type="pathway">
    <text evidence="1">Cofactor biosynthesis; coenzyme F0 biosynthesis.</text>
</comment>
<comment type="subunit">
    <text evidence="1">Consists of two subunits, CofG and CofH.</text>
</comment>
<comment type="similarity">
    <text evidence="1">Belongs to the radical SAM superfamily. CofH family.</text>
</comment>
<proteinExistence type="inferred from homology"/>
<reference key="1">
    <citation type="journal article" date="2014" name="Stand. Genomic Sci.">
        <title>Complete genome sequence of Anabaena variabilis ATCC 29413.</title>
        <authorList>
            <person name="Thiel T."/>
            <person name="Pratte B.S."/>
            <person name="Zhong J."/>
            <person name="Goodwin L."/>
            <person name="Copeland A."/>
            <person name="Lucas S."/>
            <person name="Han C."/>
            <person name="Pitluck S."/>
            <person name="Land M.L."/>
            <person name="Kyrpides N.C."/>
            <person name="Woyke T."/>
        </authorList>
    </citation>
    <scope>NUCLEOTIDE SEQUENCE [LARGE SCALE GENOMIC DNA]</scope>
    <source>
        <strain>ATCC 29413 / PCC 7937</strain>
    </source>
</reference>
<name>COFH_TRIV2</name>
<protein>
    <recommendedName>
        <fullName evidence="1">5-amino-6-(D-ribitylamino)uracil--L-tyrosine 4-hydroxyphenyl transferase</fullName>
        <ecNumber evidence="1">2.5.1.147</ecNumber>
    </recommendedName>
    <alternativeName>
        <fullName evidence="1">FO synthase subunit 2</fullName>
    </alternativeName>
</protein>
<dbReference type="EC" id="2.5.1.147" evidence="1"/>
<dbReference type="EMBL" id="CP000117">
    <property type="protein sequence ID" value="ABA20399.1"/>
    <property type="molecule type" value="Genomic_DNA"/>
</dbReference>
<dbReference type="SMR" id="Q3MF37"/>
<dbReference type="STRING" id="240292.Ava_0775"/>
<dbReference type="KEGG" id="ava:Ava_0775"/>
<dbReference type="eggNOG" id="COG1060">
    <property type="taxonomic scope" value="Bacteria"/>
</dbReference>
<dbReference type="HOGENOM" id="CLU_040406_1_0_3"/>
<dbReference type="UniPathway" id="UPA00072"/>
<dbReference type="Proteomes" id="UP000002533">
    <property type="component" value="Chromosome"/>
</dbReference>
<dbReference type="GO" id="GO:0051539">
    <property type="term" value="F:4 iron, 4 sulfur cluster binding"/>
    <property type="evidence" value="ECO:0007669"/>
    <property type="project" value="UniProtKB-KW"/>
</dbReference>
<dbReference type="GO" id="GO:0141093">
    <property type="term" value="F:5-amino-6-(D-ribitylamino)uracil--L-tyrosine 4-hydroxyphenyl transferase activity"/>
    <property type="evidence" value="ECO:0007669"/>
    <property type="project" value="UniProtKB-EC"/>
</dbReference>
<dbReference type="GO" id="GO:0044689">
    <property type="term" value="F:7,8-didemethyl-8-hydroxy-5-deazariboflavin synthase activity"/>
    <property type="evidence" value="ECO:0007669"/>
    <property type="project" value="TreeGrafter"/>
</dbReference>
<dbReference type="GO" id="GO:0005506">
    <property type="term" value="F:iron ion binding"/>
    <property type="evidence" value="ECO:0007669"/>
    <property type="project" value="UniProtKB-UniRule"/>
</dbReference>
<dbReference type="Gene3D" id="3.20.20.70">
    <property type="entry name" value="Aldolase class I"/>
    <property type="match status" value="1"/>
</dbReference>
<dbReference type="HAMAP" id="MF_01612">
    <property type="entry name" value="FO_synth_sub2"/>
    <property type="match status" value="1"/>
</dbReference>
<dbReference type="InterPro" id="IPR013785">
    <property type="entry name" value="Aldolase_TIM"/>
</dbReference>
<dbReference type="InterPro" id="IPR045567">
    <property type="entry name" value="CofH/MnqC-like_C"/>
</dbReference>
<dbReference type="InterPro" id="IPR019940">
    <property type="entry name" value="CofH_family"/>
</dbReference>
<dbReference type="InterPro" id="IPR034405">
    <property type="entry name" value="F420"/>
</dbReference>
<dbReference type="InterPro" id="IPR020050">
    <property type="entry name" value="FO_synthase_su2"/>
</dbReference>
<dbReference type="InterPro" id="IPR007197">
    <property type="entry name" value="rSAM"/>
</dbReference>
<dbReference type="NCBIfam" id="TIGR00423">
    <property type="entry name" value="CofH family radical SAM protein"/>
    <property type="match status" value="1"/>
</dbReference>
<dbReference type="NCBIfam" id="TIGR03551">
    <property type="entry name" value="F420_cofH"/>
    <property type="match status" value="1"/>
</dbReference>
<dbReference type="NCBIfam" id="NF005609">
    <property type="entry name" value="PRK07360.1"/>
    <property type="match status" value="1"/>
</dbReference>
<dbReference type="PANTHER" id="PTHR43076">
    <property type="entry name" value="FO SYNTHASE (COFH)"/>
    <property type="match status" value="1"/>
</dbReference>
<dbReference type="PANTHER" id="PTHR43076:SF1">
    <property type="entry name" value="LIPOYL SYNTHASE 2"/>
    <property type="match status" value="1"/>
</dbReference>
<dbReference type="Pfam" id="PF19288">
    <property type="entry name" value="CofH_C"/>
    <property type="match status" value="1"/>
</dbReference>
<dbReference type="Pfam" id="PF04055">
    <property type="entry name" value="Radical_SAM"/>
    <property type="match status" value="1"/>
</dbReference>
<dbReference type="PIRSF" id="PIRSF004762">
    <property type="entry name" value="CHP00423"/>
    <property type="match status" value="1"/>
</dbReference>
<dbReference type="SFLD" id="SFLDF00293">
    <property type="entry name" value="((2_3_4_5-tetrahydroxypentyl)a"/>
    <property type="match status" value="1"/>
</dbReference>
<dbReference type="SFLD" id="SFLDG01389">
    <property type="entry name" value="menaquinone_synthsis_involved"/>
    <property type="match status" value="1"/>
</dbReference>
<dbReference type="SFLD" id="SFLDS00029">
    <property type="entry name" value="Radical_SAM"/>
    <property type="match status" value="1"/>
</dbReference>
<dbReference type="SUPFAM" id="SSF102114">
    <property type="entry name" value="Radical SAM enzymes"/>
    <property type="match status" value="1"/>
</dbReference>
<dbReference type="PROSITE" id="PS51918">
    <property type="entry name" value="RADICAL_SAM"/>
    <property type="match status" value="1"/>
</dbReference>
<accession>Q3MF37</accession>
<feature type="chain" id="PRO_1000069451" description="5-amino-6-(D-ribitylamino)uracil--L-tyrosine 4-hydroxyphenyl transferase">
    <location>
        <begin position="1"/>
        <end position="391"/>
    </location>
</feature>
<feature type="domain" description="Radical SAM core" evidence="2">
    <location>
        <begin position="55"/>
        <end position="302"/>
    </location>
</feature>
<feature type="binding site" evidence="1">
    <location>
        <position position="69"/>
    </location>
    <ligand>
        <name>[4Fe-4S] cluster</name>
        <dbReference type="ChEBI" id="CHEBI:49883"/>
        <note>4Fe-4S-S-AdoMet</note>
    </ligand>
</feature>
<feature type="binding site" evidence="1">
    <location>
        <position position="73"/>
    </location>
    <ligand>
        <name>[4Fe-4S] cluster</name>
        <dbReference type="ChEBI" id="CHEBI:49883"/>
        <note>4Fe-4S-S-AdoMet</note>
    </ligand>
</feature>
<feature type="binding site" evidence="1">
    <location>
        <position position="76"/>
    </location>
    <ligand>
        <name>[4Fe-4S] cluster</name>
        <dbReference type="ChEBI" id="CHEBI:49883"/>
        <note>4Fe-4S-S-AdoMet</note>
    </ligand>
</feature>
<evidence type="ECO:0000255" key="1">
    <source>
        <dbReference type="HAMAP-Rule" id="MF_01612"/>
    </source>
</evidence>
<evidence type="ECO:0000255" key="2">
    <source>
        <dbReference type="PROSITE-ProRule" id="PRU01266"/>
    </source>
</evidence>
<sequence length="391" mass="42970">MNYKTVDVILERALLGDDISPQEGIVLLTQTDSGAIASIRHTADKLRQQQAGDTVTYVINRNINFTNICEQHCSFCAFRRNDGDADAYWLDWAGILEKSHDAVQRGATEICMQGGLHPQAQIDGKSLPYYLKLLETIKQEYPQIHLHAFSPQEVQFIARMDGLEYAGVISALQNAGVNSLPGTAAEVLDDQVRRVLCPEKINTATWLEIISTAHKLGLHTTSTILSGHIETPEQQIGHLEKLRSLQQIATNQKYPARITEFIVLPFVGQEAPKSLRRRVGRDQPVLADALLLGAVARIYLGNWIANHQPSWVKLGLAGATEALNWGCNDIGGTLMEEHITTMAGAVGGTCMEVETLQNAIASIGRPYQQRDTLYQPVESAKQLANTVIGNG</sequence>
<organism>
    <name type="scientific">Trichormus variabilis (strain ATCC 29413 / PCC 7937)</name>
    <name type="common">Anabaena variabilis</name>
    <dbReference type="NCBI Taxonomy" id="240292"/>
    <lineage>
        <taxon>Bacteria</taxon>
        <taxon>Bacillati</taxon>
        <taxon>Cyanobacteriota</taxon>
        <taxon>Cyanophyceae</taxon>
        <taxon>Nostocales</taxon>
        <taxon>Nostocaceae</taxon>
        <taxon>Trichormus</taxon>
    </lineage>
</organism>